<accession>P28126</accession>
<organism>
    <name type="scientific">Meleagris gallopavo</name>
    <name type="common">Wild turkey</name>
    <dbReference type="NCBI Taxonomy" id="9103"/>
    <lineage>
        <taxon>Eukaryota</taxon>
        <taxon>Metazoa</taxon>
        <taxon>Chordata</taxon>
        <taxon>Craniata</taxon>
        <taxon>Vertebrata</taxon>
        <taxon>Euteleostomi</taxon>
        <taxon>Archelosauria</taxon>
        <taxon>Archosauria</taxon>
        <taxon>Dinosauria</taxon>
        <taxon>Saurischia</taxon>
        <taxon>Theropoda</taxon>
        <taxon>Coelurosauria</taxon>
        <taxon>Aves</taxon>
        <taxon>Neognathae</taxon>
        <taxon>Galloanserae</taxon>
        <taxon>Galliformes</taxon>
        <taxon>Phasianidae</taxon>
        <taxon>Meleagridinae</taxon>
        <taxon>Meleagris</taxon>
    </lineage>
</organism>
<evidence type="ECO:0000250" key="1">
    <source>
        <dbReference type="UniProtKB" id="P27467"/>
    </source>
</evidence>
<evidence type="ECO:0000250" key="2">
    <source>
        <dbReference type="UniProtKB" id="P28026"/>
    </source>
</evidence>
<evidence type="ECO:0000250" key="3">
    <source>
        <dbReference type="UniProtKB" id="P56704"/>
    </source>
</evidence>
<evidence type="ECO:0000255" key="4"/>
<evidence type="ECO:0000305" key="5"/>
<protein>
    <recommendedName>
        <fullName>Protein Wnt-3b</fullName>
    </recommendedName>
</protein>
<dbReference type="EMBL" id="M91282">
    <property type="protein sequence ID" value="AAA49631.1"/>
    <property type="molecule type" value="Genomic_DNA"/>
</dbReference>
<dbReference type="SMR" id="P28126"/>
<dbReference type="GlyCosmos" id="P28126">
    <property type="glycosylation" value="1 site, No reported glycans"/>
</dbReference>
<dbReference type="InParanoid" id="P28126"/>
<dbReference type="Proteomes" id="UP000001645">
    <property type="component" value="Unplaced"/>
</dbReference>
<dbReference type="GO" id="GO:0005615">
    <property type="term" value="C:extracellular space"/>
    <property type="evidence" value="ECO:0007669"/>
    <property type="project" value="TreeGrafter"/>
</dbReference>
<dbReference type="GO" id="GO:0005125">
    <property type="term" value="F:cytokine activity"/>
    <property type="evidence" value="ECO:0007669"/>
    <property type="project" value="TreeGrafter"/>
</dbReference>
<dbReference type="GO" id="GO:0005109">
    <property type="term" value="F:frizzled binding"/>
    <property type="evidence" value="ECO:0007669"/>
    <property type="project" value="TreeGrafter"/>
</dbReference>
<dbReference type="GO" id="GO:0060070">
    <property type="term" value="P:canonical Wnt signaling pathway"/>
    <property type="evidence" value="ECO:0007669"/>
    <property type="project" value="TreeGrafter"/>
</dbReference>
<dbReference type="GO" id="GO:0045165">
    <property type="term" value="P:cell fate commitment"/>
    <property type="evidence" value="ECO:0007669"/>
    <property type="project" value="TreeGrafter"/>
</dbReference>
<dbReference type="GO" id="GO:0030182">
    <property type="term" value="P:neuron differentiation"/>
    <property type="evidence" value="ECO:0007669"/>
    <property type="project" value="TreeGrafter"/>
</dbReference>
<dbReference type="FunFam" id="3.30.2460.20:FF:000009">
    <property type="entry name" value="Protein Wnt-3a"/>
    <property type="match status" value="1"/>
</dbReference>
<dbReference type="Gene3D" id="3.30.2460.20">
    <property type="match status" value="1"/>
</dbReference>
<dbReference type="InterPro" id="IPR005817">
    <property type="entry name" value="Wnt"/>
</dbReference>
<dbReference type="InterPro" id="IPR043158">
    <property type="entry name" value="Wnt_C"/>
</dbReference>
<dbReference type="PANTHER" id="PTHR12027:SF82">
    <property type="entry name" value="PROTO-ONCOGENE WNT-3"/>
    <property type="match status" value="1"/>
</dbReference>
<dbReference type="PANTHER" id="PTHR12027">
    <property type="entry name" value="WNT RELATED"/>
    <property type="match status" value="1"/>
</dbReference>
<dbReference type="Pfam" id="PF00110">
    <property type="entry name" value="wnt"/>
    <property type="match status" value="1"/>
</dbReference>
<dbReference type="SMART" id="SM00097">
    <property type="entry name" value="WNT1"/>
    <property type="match status" value="1"/>
</dbReference>
<feature type="chain" id="PRO_0000200619" description="Protein Wnt-3b">
    <location>
        <begin position="1" status="less than"/>
        <end position="123" status="greater than"/>
    </location>
</feature>
<feature type="lipid moiety-binding region" description="O-palmitoleoyl serine; by PORCN" evidence="3">
    <location>
        <position position="1"/>
    </location>
</feature>
<feature type="glycosylation site" description="N-linked (GlcNAc...) asparagine" evidence="4">
    <location>
        <position position="90"/>
    </location>
</feature>
<feature type="disulfide bond" evidence="2">
    <location>
        <begin position="89"/>
        <end position="104"/>
    </location>
</feature>
<feature type="non-terminal residue">
    <location>
        <position position="1"/>
    </location>
</feature>
<feature type="non-terminal residue">
    <location>
        <position position="123"/>
    </location>
</feature>
<sequence length="123" mass="14189">SGSCEVKTCWWAQPDFRAIGDYLKDKYDSASEMVVEKHRESRGWVETLRAKYALFKPPTERDLVYYENSPNFCEPNPETGLFGTRDRTCNVTSHGIDGCDLLCCGRGHNTRTEKRKEKCHCIF</sequence>
<name>WNT3B_MELGA</name>
<reference key="1">
    <citation type="journal article" date="1992" name="Proc. Natl. Acad. Sci. U.S.A.">
        <title>Diversification of the Wnt gene family on the ancestral lineage of vertebrates.</title>
        <authorList>
            <person name="Sidow A."/>
        </authorList>
    </citation>
    <scope>NUCLEOTIDE SEQUENCE [GENOMIC DNA]</scope>
</reference>
<gene>
    <name type="primary">WNT3B</name>
</gene>
<keyword id="KW-0217">Developmental protein</keyword>
<keyword id="KW-1015">Disulfide bond</keyword>
<keyword id="KW-0272">Extracellular matrix</keyword>
<keyword id="KW-0325">Glycoprotein</keyword>
<keyword id="KW-0449">Lipoprotein</keyword>
<keyword id="KW-1185">Reference proteome</keyword>
<keyword id="KW-0964">Secreted</keyword>
<keyword id="KW-0879">Wnt signaling pathway</keyword>
<comment type="function">
    <text>Ligand for members of the frizzled family of seven transmembrane receptors. Probable developmental protein. May be a signaling molecule which affects the development of discrete regions of tissues. Is likely to signal over only few cell diameters.</text>
</comment>
<comment type="subcellular location">
    <subcellularLocation>
        <location>Secreted</location>
        <location>Extracellular space</location>
        <location>Extracellular matrix</location>
    </subcellularLocation>
</comment>
<comment type="PTM">
    <text evidence="1 3">Palmitoleoylation is required for efficient binding to frizzled receptors. Depalmitoleoylation leads to Wnt signaling pathway inhibition.</text>
</comment>
<comment type="similarity">
    <text evidence="5">Belongs to the Wnt family.</text>
</comment>
<proteinExistence type="inferred from homology"/>